<evidence type="ECO:0000250" key="1"/>
<evidence type="ECO:0000255" key="2">
    <source>
        <dbReference type="PROSITE-ProRule" id="PRU01082"/>
    </source>
</evidence>
<evidence type="ECO:0000256" key="3">
    <source>
        <dbReference type="SAM" id="MobiDB-lite"/>
    </source>
</evidence>
<evidence type="ECO:0000269" key="4">
    <source>
    </source>
</evidence>
<evidence type="ECO:0000305" key="5"/>
<protein>
    <recommendedName>
        <fullName>Probable protein phosphatase 2C 36</fullName>
        <shortName>AtPP2C36</shortName>
        <ecNumber>3.1.3.16</ecNumber>
    </recommendedName>
    <alternativeName>
        <fullName>Protein POLTERGEIST-LIKE 3</fullName>
    </alternativeName>
    <alternativeName>
        <fullName>Protein phosphatase 2C PLL3</fullName>
        <shortName>PP2C PLL3</shortName>
    </alternativeName>
</protein>
<dbReference type="EC" id="3.1.3.16"/>
<dbReference type="EMBL" id="AC011436">
    <property type="protein sequence ID" value="AAF14035.1"/>
    <property type="molecule type" value="Genomic_DNA"/>
</dbReference>
<dbReference type="EMBL" id="CP002686">
    <property type="protein sequence ID" value="AEE74761.1"/>
    <property type="molecule type" value="Genomic_DNA"/>
</dbReference>
<dbReference type="RefSeq" id="NP_187551.1">
    <molecule id="Q9SR24-1"/>
    <property type="nucleotide sequence ID" value="NM_111774.2"/>
</dbReference>
<dbReference type="SMR" id="Q9SR24"/>
<dbReference type="FunCoup" id="Q9SR24">
    <property type="interactions" value="91"/>
</dbReference>
<dbReference type="STRING" id="3702.Q9SR24"/>
<dbReference type="PaxDb" id="3702-AT3G09400.1"/>
<dbReference type="ProteomicsDB" id="248875">
    <molecule id="Q9SR24-1"/>
</dbReference>
<dbReference type="EnsemblPlants" id="AT3G09400.1">
    <molecule id="Q9SR24-1"/>
    <property type="protein sequence ID" value="AT3G09400.1"/>
    <property type="gene ID" value="AT3G09400"/>
</dbReference>
<dbReference type="GeneID" id="820099"/>
<dbReference type="Gramene" id="AT3G09400.1">
    <molecule id="Q9SR24-1"/>
    <property type="protein sequence ID" value="AT3G09400.1"/>
    <property type="gene ID" value="AT3G09400"/>
</dbReference>
<dbReference type="KEGG" id="ath:AT3G09400"/>
<dbReference type="Araport" id="AT3G09400"/>
<dbReference type="TAIR" id="AT3G09400">
    <property type="gene designation" value="PLL3"/>
</dbReference>
<dbReference type="eggNOG" id="KOG0700">
    <property type="taxonomic scope" value="Eukaryota"/>
</dbReference>
<dbReference type="HOGENOM" id="CLU_013173_12_1_1"/>
<dbReference type="InParanoid" id="Q9SR24"/>
<dbReference type="OMA" id="INKNSTH"/>
<dbReference type="PhylomeDB" id="Q9SR24"/>
<dbReference type="PRO" id="PR:Q9SR24"/>
<dbReference type="Proteomes" id="UP000006548">
    <property type="component" value="Chromosome 3"/>
</dbReference>
<dbReference type="ExpressionAtlas" id="Q9SR24">
    <property type="expression patterns" value="baseline and differential"/>
</dbReference>
<dbReference type="GO" id="GO:0005634">
    <property type="term" value="C:nucleus"/>
    <property type="evidence" value="ECO:0007669"/>
    <property type="project" value="UniProtKB-SubCell"/>
</dbReference>
<dbReference type="GO" id="GO:0046872">
    <property type="term" value="F:metal ion binding"/>
    <property type="evidence" value="ECO:0007669"/>
    <property type="project" value="UniProtKB-KW"/>
</dbReference>
<dbReference type="GO" id="GO:0004722">
    <property type="term" value="F:protein serine/threonine phosphatase activity"/>
    <property type="evidence" value="ECO:0007669"/>
    <property type="project" value="UniProtKB-EC"/>
</dbReference>
<dbReference type="CDD" id="cd00143">
    <property type="entry name" value="PP2Cc"/>
    <property type="match status" value="1"/>
</dbReference>
<dbReference type="FunFam" id="3.60.40.10:FF:000053">
    <property type="entry name" value="Protein phosphatase 2C 29"/>
    <property type="match status" value="1"/>
</dbReference>
<dbReference type="Gene3D" id="3.60.40.10">
    <property type="entry name" value="PPM-type phosphatase domain"/>
    <property type="match status" value="1"/>
</dbReference>
<dbReference type="InterPro" id="IPR015655">
    <property type="entry name" value="PP2C"/>
</dbReference>
<dbReference type="InterPro" id="IPR036457">
    <property type="entry name" value="PPM-type-like_dom_sf"/>
</dbReference>
<dbReference type="InterPro" id="IPR001932">
    <property type="entry name" value="PPM-type_phosphatase-like_dom"/>
</dbReference>
<dbReference type="PANTHER" id="PTHR13832">
    <property type="entry name" value="PROTEIN PHOSPHATASE 2C"/>
    <property type="match status" value="1"/>
</dbReference>
<dbReference type="PANTHER" id="PTHR13832:SF709">
    <property type="entry name" value="PROTEIN PHOSPHATASE 2C 36-RELATED"/>
    <property type="match status" value="1"/>
</dbReference>
<dbReference type="Pfam" id="PF00481">
    <property type="entry name" value="PP2C"/>
    <property type="match status" value="1"/>
</dbReference>
<dbReference type="SMART" id="SM00332">
    <property type="entry name" value="PP2Cc"/>
    <property type="match status" value="1"/>
</dbReference>
<dbReference type="SUPFAM" id="SSF81606">
    <property type="entry name" value="PP2C-like"/>
    <property type="match status" value="1"/>
</dbReference>
<dbReference type="PROSITE" id="PS51746">
    <property type="entry name" value="PPM_2"/>
    <property type="match status" value="1"/>
</dbReference>
<name>P2C36_ARATH</name>
<proteinExistence type="inferred from homology"/>
<gene>
    <name type="primary">PLL3</name>
    <name type="ordered locus">At3g09400</name>
    <name type="ORF">F3L24.29</name>
</gene>
<keyword id="KW-0025">Alternative splicing</keyword>
<keyword id="KW-0378">Hydrolase</keyword>
<keyword id="KW-0460">Magnesium</keyword>
<keyword id="KW-0464">Manganese</keyword>
<keyword id="KW-0479">Metal-binding</keyword>
<keyword id="KW-0539">Nucleus</keyword>
<keyword id="KW-0904">Protein phosphatase</keyword>
<keyword id="KW-1185">Reference proteome</keyword>
<feature type="chain" id="PRO_0000301261" description="Probable protein phosphatase 2C 36">
    <location>
        <begin position="1"/>
        <end position="650"/>
    </location>
</feature>
<feature type="domain" description="PPM-type phosphatase" evidence="2">
    <location>
        <begin position="239"/>
        <end position="641"/>
    </location>
</feature>
<feature type="region of interest" description="Disordered" evidence="3">
    <location>
        <begin position="146"/>
        <end position="166"/>
    </location>
</feature>
<feature type="compositionally biased region" description="Basic residues" evidence="3">
    <location>
        <begin position="148"/>
        <end position="166"/>
    </location>
</feature>
<feature type="binding site" evidence="1">
    <location>
        <position position="276"/>
    </location>
    <ligand>
        <name>Mn(2+)</name>
        <dbReference type="ChEBI" id="CHEBI:29035"/>
        <label>1</label>
    </ligand>
</feature>
<feature type="binding site" evidence="1">
    <location>
        <position position="276"/>
    </location>
    <ligand>
        <name>Mn(2+)</name>
        <dbReference type="ChEBI" id="CHEBI:29035"/>
        <label>2</label>
    </ligand>
</feature>
<feature type="binding site" evidence="1">
    <location>
        <position position="277"/>
    </location>
    <ligand>
        <name>Mn(2+)</name>
        <dbReference type="ChEBI" id="CHEBI:29035"/>
        <label>1</label>
    </ligand>
</feature>
<feature type="binding site" evidence="1">
    <location>
        <position position="569"/>
    </location>
    <ligand>
        <name>Mn(2+)</name>
        <dbReference type="ChEBI" id="CHEBI:29035"/>
        <label>2</label>
    </ligand>
</feature>
<feature type="binding site" evidence="1">
    <location>
        <position position="632"/>
    </location>
    <ligand>
        <name>Mn(2+)</name>
        <dbReference type="ChEBI" id="CHEBI:29035"/>
        <label>2</label>
    </ligand>
</feature>
<accession>Q9SR24</accession>
<organism>
    <name type="scientific">Arabidopsis thaliana</name>
    <name type="common">Mouse-ear cress</name>
    <dbReference type="NCBI Taxonomy" id="3702"/>
    <lineage>
        <taxon>Eukaryota</taxon>
        <taxon>Viridiplantae</taxon>
        <taxon>Streptophyta</taxon>
        <taxon>Embryophyta</taxon>
        <taxon>Tracheophyta</taxon>
        <taxon>Spermatophyta</taxon>
        <taxon>Magnoliopsida</taxon>
        <taxon>eudicotyledons</taxon>
        <taxon>Gunneridae</taxon>
        <taxon>Pentapetalae</taxon>
        <taxon>rosids</taxon>
        <taxon>malvids</taxon>
        <taxon>Brassicales</taxon>
        <taxon>Brassicaceae</taxon>
        <taxon>Camelineae</taxon>
        <taxon>Arabidopsis</taxon>
    </lineage>
</organism>
<comment type="catalytic activity">
    <reaction>
        <text>O-phospho-L-seryl-[protein] + H2O = L-seryl-[protein] + phosphate</text>
        <dbReference type="Rhea" id="RHEA:20629"/>
        <dbReference type="Rhea" id="RHEA-COMP:9863"/>
        <dbReference type="Rhea" id="RHEA-COMP:11604"/>
        <dbReference type="ChEBI" id="CHEBI:15377"/>
        <dbReference type="ChEBI" id="CHEBI:29999"/>
        <dbReference type="ChEBI" id="CHEBI:43474"/>
        <dbReference type="ChEBI" id="CHEBI:83421"/>
        <dbReference type="EC" id="3.1.3.16"/>
    </reaction>
</comment>
<comment type="catalytic activity">
    <reaction>
        <text>O-phospho-L-threonyl-[protein] + H2O = L-threonyl-[protein] + phosphate</text>
        <dbReference type="Rhea" id="RHEA:47004"/>
        <dbReference type="Rhea" id="RHEA-COMP:11060"/>
        <dbReference type="Rhea" id="RHEA-COMP:11605"/>
        <dbReference type="ChEBI" id="CHEBI:15377"/>
        <dbReference type="ChEBI" id="CHEBI:30013"/>
        <dbReference type="ChEBI" id="CHEBI:43474"/>
        <dbReference type="ChEBI" id="CHEBI:61977"/>
        <dbReference type="EC" id="3.1.3.16"/>
    </reaction>
</comment>
<comment type="cofactor">
    <cofactor evidence="1">
        <name>Mg(2+)</name>
        <dbReference type="ChEBI" id="CHEBI:18420"/>
    </cofactor>
    <cofactor evidence="1">
        <name>Mn(2+)</name>
        <dbReference type="ChEBI" id="CHEBI:29035"/>
    </cofactor>
    <text evidence="1">Binds 2 magnesium or manganese ions per subunit.</text>
</comment>
<comment type="subcellular location">
    <subcellularLocation>
        <location evidence="5">Nucleus</location>
    </subcellularLocation>
</comment>
<comment type="alternative products">
    <event type="alternative splicing"/>
    <isoform>
        <id>Q9SR24-1</id>
        <name>1</name>
        <sequence type="displayed"/>
    </isoform>
    <text>A number of isoforms are produced. According to EST sequences.</text>
</comment>
<comment type="domain">
    <text>The conserved PP2C phosphatase domain (240-639) is interrupted by an insertion of approximately 100 amino acids.</text>
</comment>
<comment type="disruption phenotype">
    <text evidence="4">No visible phenotype.</text>
</comment>
<comment type="similarity">
    <text evidence="5">Belongs to the PP2C family.</text>
</comment>
<reference key="1">
    <citation type="journal article" date="2000" name="Nature">
        <title>Sequence and analysis of chromosome 3 of the plant Arabidopsis thaliana.</title>
        <authorList>
            <person name="Salanoubat M."/>
            <person name="Lemcke K."/>
            <person name="Rieger M."/>
            <person name="Ansorge W."/>
            <person name="Unseld M."/>
            <person name="Fartmann B."/>
            <person name="Valle G."/>
            <person name="Bloecker H."/>
            <person name="Perez-Alonso M."/>
            <person name="Obermaier B."/>
            <person name="Delseny M."/>
            <person name="Boutry M."/>
            <person name="Grivell L.A."/>
            <person name="Mache R."/>
            <person name="Puigdomenech P."/>
            <person name="De Simone V."/>
            <person name="Choisne N."/>
            <person name="Artiguenave F."/>
            <person name="Robert C."/>
            <person name="Brottier P."/>
            <person name="Wincker P."/>
            <person name="Cattolico L."/>
            <person name="Weissenbach J."/>
            <person name="Saurin W."/>
            <person name="Quetier F."/>
            <person name="Schaefer M."/>
            <person name="Mueller-Auer S."/>
            <person name="Gabel C."/>
            <person name="Fuchs M."/>
            <person name="Benes V."/>
            <person name="Wurmbach E."/>
            <person name="Drzonek H."/>
            <person name="Erfle H."/>
            <person name="Jordan N."/>
            <person name="Bangert S."/>
            <person name="Wiedelmann R."/>
            <person name="Kranz H."/>
            <person name="Voss H."/>
            <person name="Holland R."/>
            <person name="Brandt P."/>
            <person name="Nyakatura G."/>
            <person name="Vezzi A."/>
            <person name="D'Angelo M."/>
            <person name="Pallavicini A."/>
            <person name="Toppo S."/>
            <person name="Simionati B."/>
            <person name="Conrad A."/>
            <person name="Hornischer K."/>
            <person name="Kauer G."/>
            <person name="Loehnert T.-H."/>
            <person name="Nordsiek G."/>
            <person name="Reichelt J."/>
            <person name="Scharfe M."/>
            <person name="Schoen O."/>
            <person name="Bargues M."/>
            <person name="Terol J."/>
            <person name="Climent J."/>
            <person name="Navarro P."/>
            <person name="Collado C."/>
            <person name="Perez-Perez A."/>
            <person name="Ottenwaelder B."/>
            <person name="Duchemin D."/>
            <person name="Cooke R."/>
            <person name="Laudie M."/>
            <person name="Berger-Llauro C."/>
            <person name="Purnelle B."/>
            <person name="Masuy D."/>
            <person name="de Haan M."/>
            <person name="Maarse A.C."/>
            <person name="Alcaraz J.-P."/>
            <person name="Cottet A."/>
            <person name="Casacuberta E."/>
            <person name="Monfort A."/>
            <person name="Argiriou A."/>
            <person name="Flores M."/>
            <person name="Liguori R."/>
            <person name="Vitale D."/>
            <person name="Mannhaupt G."/>
            <person name="Haase D."/>
            <person name="Schoof H."/>
            <person name="Rudd S."/>
            <person name="Zaccaria P."/>
            <person name="Mewes H.-W."/>
            <person name="Mayer K.F.X."/>
            <person name="Kaul S."/>
            <person name="Town C.D."/>
            <person name="Koo H.L."/>
            <person name="Tallon L.J."/>
            <person name="Jenkins J."/>
            <person name="Rooney T."/>
            <person name="Rizzo M."/>
            <person name="Walts A."/>
            <person name="Utterback T."/>
            <person name="Fujii C.Y."/>
            <person name="Shea T.P."/>
            <person name="Creasy T.H."/>
            <person name="Haas B."/>
            <person name="Maiti R."/>
            <person name="Wu D."/>
            <person name="Peterson J."/>
            <person name="Van Aken S."/>
            <person name="Pai G."/>
            <person name="Militscher J."/>
            <person name="Sellers P."/>
            <person name="Gill J.E."/>
            <person name="Feldblyum T.V."/>
            <person name="Preuss D."/>
            <person name="Lin X."/>
            <person name="Nierman W.C."/>
            <person name="Salzberg S.L."/>
            <person name="White O."/>
            <person name="Venter J.C."/>
            <person name="Fraser C.M."/>
            <person name="Kaneko T."/>
            <person name="Nakamura Y."/>
            <person name="Sato S."/>
            <person name="Kato T."/>
            <person name="Asamizu E."/>
            <person name="Sasamoto S."/>
            <person name="Kimura T."/>
            <person name="Idesawa K."/>
            <person name="Kawashima K."/>
            <person name="Kishida Y."/>
            <person name="Kiyokawa C."/>
            <person name="Kohara M."/>
            <person name="Matsumoto M."/>
            <person name="Matsuno A."/>
            <person name="Muraki A."/>
            <person name="Nakayama S."/>
            <person name="Nakazaki N."/>
            <person name="Shinpo S."/>
            <person name="Takeuchi C."/>
            <person name="Wada T."/>
            <person name="Watanabe A."/>
            <person name="Yamada M."/>
            <person name="Yasuda M."/>
            <person name="Tabata S."/>
        </authorList>
    </citation>
    <scope>NUCLEOTIDE SEQUENCE [LARGE SCALE GENOMIC DNA]</scope>
    <source>
        <strain>cv. Columbia</strain>
    </source>
</reference>
<reference key="2">
    <citation type="journal article" date="2017" name="Plant J.">
        <title>Araport11: a complete reannotation of the Arabidopsis thaliana reference genome.</title>
        <authorList>
            <person name="Cheng C.Y."/>
            <person name="Krishnakumar V."/>
            <person name="Chan A.P."/>
            <person name="Thibaud-Nissen F."/>
            <person name="Schobel S."/>
            <person name="Town C.D."/>
        </authorList>
    </citation>
    <scope>GENOME REANNOTATION</scope>
    <source>
        <strain>cv. Columbia</strain>
    </source>
</reference>
<reference key="3">
    <citation type="journal article" date="2005" name="Dev. Biol.">
        <title>POL and related phosphatases are dosage-sensitive regulators of meristem and organ development in Arabidopsis.</title>
        <authorList>
            <person name="Song S.-K."/>
            <person name="Clark S.E."/>
        </authorList>
    </citation>
    <scope>GENE FAMILY</scope>
    <scope>NOMENCLATURE</scope>
    <scope>DISRUPTION PHENOTYPE</scope>
</reference>
<reference key="4">
    <citation type="journal article" date="2008" name="BMC Genomics">
        <title>Genome-wide and expression analysis of protein phosphatase 2C in rice and Arabidopsis.</title>
        <authorList>
            <person name="Xue T."/>
            <person name="Wang D."/>
            <person name="Zhang S."/>
            <person name="Ehlting J."/>
            <person name="Ni F."/>
            <person name="Jacab S."/>
            <person name="Zheng C."/>
            <person name="Zhong Y."/>
        </authorList>
    </citation>
    <scope>GENE FAMILY</scope>
    <scope>NOMENCLATURE</scope>
</reference>
<sequence>MGNGVASFSGCCAGTTAGEISGRYVTGVGLVQENLGHSFCYVRPVLTGSKSSFPPEPPLRPDPIPGTTTTFRSISGASVSANTSTALSTSLSTDTSGIASAFESSNRFASLPLQPVPRSPIKKSDHGSGLFERRFLSGPIESGLVSGKKTKEKAKLKKSGSKSFTKPKLKKSESKIFTFKNVFTNLSCSKKSVIKPINGFDSFDGSSDTDRYIPEINSLSTIVSSHEKPRIKEEEDKTESALEEPKIQWAQGKAGEDRVHVILSEENGWLFVGIYDGFSGPDPPDYLIKNLYTAVLRELKGLLWIDKGESYNRNGESNIEKQSTVEHASDSDQENCPVMNGNDVACGSRNITSDVKKLQWRCEWEHNSSNKSNNINHKDVLRALQQALEKTEESFDLMVNENPELALMGSCVLVTLMKGEDVYVMSVGDSRAVLARRPNVEKMKMQKELERVKEESPLETLFITERGLSLLVPVQLNKEHSTSVEEEVRRIKKEHPDDILAIENNRVKGYLKVTRAFGAGFLKQPKWNEALLEMFRIDYVGTSPYITCSPSLHHHRLSSRDKFLILSSDGLYEYFSNEEAIFEVDSFISAFPEGDPAQHLIQEVLLRAAKKYGMDFHELLEIPQGDRRRYHDDVSVIVISLEGRIWRSSM</sequence>